<protein>
    <recommendedName>
        <fullName evidence="1">Small ribosomal subunit protein uS11</fullName>
    </recommendedName>
    <alternativeName>
        <fullName evidence="2">30S ribosomal protein S11</fullName>
    </alternativeName>
</protein>
<dbReference type="EMBL" id="CP000266">
    <property type="protein sequence ID" value="ABF05360.1"/>
    <property type="molecule type" value="Genomic_DNA"/>
</dbReference>
<dbReference type="RefSeq" id="WP_001029684.1">
    <property type="nucleotide sequence ID" value="NC_008258.1"/>
</dbReference>
<dbReference type="SMR" id="Q0T005"/>
<dbReference type="GeneID" id="93778690"/>
<dbReference type="KEGG" id="sfv:SFV_3317"/>
<dbReference type="HOGENOM" id="CLU_072439_5_0_6"/>
<dbReference type="Proteomes" id="UP000000659">
    <property type="component" value="Chromosome"/>
</dbReference>
<dbReference type="GO" id="GO:1990904">
    <property type="term" value="C:ribonucleoprotein complex"/>
    <property type="evidence" value="ECO:0007669"/>
    <property type="project" value="UniProtKB-KW"/>
</dbReference>
<dbReference type="GO" id="GO:0005840">
    <property type="term" value="C:ribosome"/>
    <property type="evidence" value="ECO:0007669"/>
    <property type="project" value="UniProtKB-KW"/>
</dbReference>
<dbReference type="GO" id="GO:0019843">
    <property type="term" value="F:rRNA binding"/>
    <property type="evidence" value="ECO:0007669"/>
    <property type="project" value="UniProtKB-UniRule"/>
</dbReference>
<dbReference type="GO" id="GO:0003735">
    <property type="term" value="F:structural constituent of ribosome"/>
    <property type="evidence" value="ECO:0007669"/>
    <property type="project" value="InterPro"/>
</dbReference>
<dbReference type="GO" id="GO:0006412">
    <property type="term" value="P:translation"/>
    <property type="evidence" value="ECO:0007669"/>
    <property type="project" value="UniProtKB-UniRule"/>
</dbReference>
<dbReference type="FunFam" id="3.30.420.80:FF:000001">
    <property type="entry name" value="30S ribosomal protein S11"/>
    <property type="match status" value="1"/>
</dbReference>
<dbReference type="Gene3D" id="3.30.420.80">
    <property type="entry name" value="Ribosomal protein S11"/>
    <property type="match status" value="1"/>
</dbReference>
<dbReference type="HAMAP" id="MF_01310">
    <property type="entry name" value="Ribosomal_uS11"/>
    <property type="match status" value="1"/>
</dbReference>
<dbReference type="InterPro" id="IPR001971">
    <property type="entry name" value="Ribosomal_uS11"/>
</dbReference>
<dbReference type="InterPro" id="IPR019981">
    <property type="entry name" value="Ribosomal_uS11_bac-type"/>
</dbReference>
<dbReference type="InterPro" id="IPR018102">
    <property type="entry name" value="Ribosomal_uS11_CS"/>
</dbReference>
<dbReference type="InterPro" id="IPR036967">
    <property type="entry name" value="Ribosomal_uS11_sf"/>
</dbReference>
<dbReference type="NCBIfam" id="NF003698">
    <property type="entry name" value="PRK05309.1"/>
    <property type="match status" value="1"/>
</dbReference>
<dbReference type="NCBIfam" id="TIGR03632">
    <property type="entry name" value="uS11_bact"/>
    <property type="match status" value="1"/>
</dbReference>
<dbReference type="PANTHER" id="PTHR11759">
    <property type="entry name" value="40S RIBOSOMAL PROTEIN S14/30S RIBOSOMAL PROTEIN S11"/>
    <property type="match status" value="1"/>
</dbReference>
<dbReference type="Pfam" id="PF00411">
    <property type="entry name" value="Ribosomal_S11"/>
    <property type="match status" value="1"/>
</dbReference>
<dbReference type="PIRSF" id="PIRSF002131">
    <property type="entry name" value="Ribosomal_S11"/>
    <property type="match status" value="1"/>
</dbReference>
<dbReference type="SUPFAM" id="SSF53137">
    <property type="entry name" value="Translational machinery components"/>
    <property type="match status" value="1"/>
</dbReference>
<dbReference type="PROSITE" id="PS00054">
    <property type="entry name" value="RIBOSOMAL_S11"/>
    <property type="match status" value="1"/>
</dbReference>
<accession>Q0T005</accession>
<evidence type="ECO:0000255" key="1">
    <source>
        <dbReference type="HAMAP-Rule" id="MF_01310"/>
    </source>
</evidence>
<evidence type="ECO:0000305" key="2"/>
<proteinExistence type="inferred from homology"/>
<sequence>MAKAPIRARKRVRKQVSDGVAHIHASFNNTIVTITDRQGNALGWATAGGSGFRGSRKSTPFAAQVAAERCADAVKEYGIKNLEVMVKGPGPGRESTIRALNAAGFRITNITDVTPIPHNGCRPPKKRRV</sequence>
<reference key="1">
    <citation type="journal article" date="2006" name="BMC Genomics">
        <title>Complete genome sequence of Shigella flexneri 5b and comparison with Shigella flexneri 2a.</title>
        <authorList>
            <person name="Nie H."/>
            <person name="Yang F."/>
            <person name="Zhang X."/>
            <person name="Yang J."/>
            <person name="Chen L."/>
            <person name="Wang J."/>
            <person name="Xiong Z."/>
            <person name="Peng J."/>
            <person name="Sun L."/>
            <person name="Dong J."/>
            <person name="Xue Y."/>
            <person name="Xu X."/>
            <person name="Chen S."/>
            <person name="Yao Z."/>
            <person name="Shen Y."/>
            <person name="Jin Q."/>
        </authorList>
    </citation>
    <scope>NUCLEOTIDE SEQUENCE [LARGE SCALE GENOMIC DNA]</scope>
    <source>
        <strain>8401</strain>
    </source>
</reference>
<organism>
    <name type="scientific">Shigella flexneri serotype 5b (strain 8401)</name>
    <dbReference type="NCBI Taxonomy" id="373384"/>
    <lineage>
        <taxon>Bacteria</taxon>
        <taxon>Pseudomonadati</taxon>
        <taxon>Pseudomonadota</taxon>
        <taxon>Gammaproteobacteria</taxon>
        <taxon>Enterobacterales</taxon>
        <taxon>Enterobacteriaceae</taxon>
        <taxon>Shigella</taxon>
    </lineage>
</organism>
<name>RS11_SHIF8</name>
<keyword id="KW-0687">Ribonucleoprotein</keyword>
<keyword id="KW-0689">Ribosomal protein</keyword>
<keyword id="KW-0694">RNA-binding</keyword>
<keyword id="KW-0699">rRNA-binding</keyword>
<gene>
    <name evidence="1" type="primary">rpsK</name>
    <name type="ordered locus">SFV_3317</name>
</gene>
<comment type="function">
    <text evidence="1">Located on the platform of the 30S subunit, it bridges several disparate RNA helices of the 16S rRNA. Forms part of the Shine-Dalgarno cleft in the 70S ribosome.</text>
</comment>
<comment type="subunit">
    <text evidence="1">Part of the 30S ribosomal subunit. Interacts with proteins S7 and S18. Binds to IF-3.</text>
</comment>
<comment type="similarity">
    <text evidence="1">Belongs to the universal ribosomal protein uS11 family.</text>
</comment>
<feature type="chain" id="PRO_0000294856" description="Small ribosomal subunit protein uS11">
    <location>
        <begin position="1"/>
        <end position="129"/>
    </location>
</feature>